<gene>
    <name type="primary">Fam120c</name>
    <name type="synonym">ORF34</name>
</gene>
<evidence type="ECO:0000256" key="1">
    <source>
        <dbReference type="SAM" id="MobiDB-lite"/>
    </source>
</evidence>
<evidence type="ECO:0000303" key="2">
    <source>
    </source>
</evidence>
<evidence type="ECO:0000303" key="3">
    <source>
    </source>
</evidence>
<evidence type="ECO:0000305" key="4"/>
<evidence type="ECO:0007744" key="5">
    <source>
    </source>
</evidence>
<protein>
    <recommendedName>
        <fullName>Constitutive coactivator of PPAR-gamma-like protein 2</fullName>
    </recommendedName>
    <alternativeName>
        <fullName>Protein FAM120C</fullName>
    </alternativeName>
</protein>
<dbReference type="EMBL" id="AY150023">
    <property type="protein sequence ID" value="AAO24119.1"/>
    <property type="molecule type" value="mRNA"/>
</dbReference>
<dbReference type="EMBL" id="AY150024">
    <property type="protein sequence ID" value="AAO24120.1"/>
    <property type="molecule type" value="mRNA"/>
</dbReference>
<dbReference type="EMBL" id="AK086058">
    <property type="protein sequence ID" value="BAC39601.1"/>
    <property type="status" value="ALT_INIT"/>
    <property type="molecule type" value="mRNA"/>
</dbReference>
<dbReference type="EMBL" id="AK156920">
    <property type="protein sequence ID" value="BAE33898.1"/>
    <property type="molecule type" value="mRNA"/>
</dbReference>
<dbReference type="EMBL" id="AL662922">
    <property type="status" value="NOT_ANNOTATED_CDS"/>
    <property type="molecule type" value="Genomic_DNA"/>
</dbReference>
<dbReference type="EMBL" id="AL807396">
    <property type="status" value="NOT_ANNOTATED_CDS"/>
    <property type="molecule type" value="Genomic_DNA"/>
</dbReference>
<dbReference type="EMBL" id="BC137973">
    <property type="protein sequence ID" value="AAI37974.1"/>
    <property type="molecule type" value="mRNA"/>
</dbReference>
<dbReference type="CCDS" id="CCDS41175.1">
    <molecule id="Q8C3F2-1"/>
</dbReference>
<dbReference type="RefSeq" id="NP_932773.2">
    <molecule id="Q8C3F2-1"/>
    <property type="nucleotide sequence ID" value="NM_198105.2"/>
</dbReference>
<dbReference type="BioGRID" id="228896">
    <property type="interactions" value="10"/>
</dbReference>
<dbReference type="FunCoup" id="Q8C3F2">
    <property type="interactions" value="2405"/>
</dbReference>
<dbReference type="IntAct" id="Q8C3F2">
    <property type="interactions" value="4"/>
</dbReference>
<dbReference type="MINT" id="Q8C3F2"/>
<dbReference type="STRING" id="10090.ENSMUSP00000073082"/>
<dbReference type="iPTMnet" id="Q8C3F2"/>
<dbReference type="PhosphoSitePlus" id="Q8C3F2"/>
<dbReference type="SwissPalm" id="Q8C3F2"/>
<dbReference type="jPOST" id="Q8C3F2"/>
<dbReference type="PaxDb" id="10090-ENSMUSP00000073082"/>
<dbReference type="PeptideAtlas" id="Q8C3F2"/>
<dbReference type="ProteomicsDB" id="275818">
    <molecule id="Q8C3F2-1"/>
</dbReference>
<dbReference type="ProteomicsDB" id="275819">
    <molecule id="Q8C3F2-2"/>
</dbReference>
<dbReference type="ProteomicsDB" id="275820">
    <molecule id="Q8C3F2-3"/>
</dbReference>
<dbReference type="Pumba" id="Q8C3F2"/>
<dbReference type="Antibodypedia" id="26758">
    <property type="antibodies" value="61 antibodies from 15 providers"/>
</dbReference>
<dbReference type="DNASU" id="207375"/>
<dbReference type="Ensembl" id="ENSMUST00000073364.6">
    <molecule id="Q8C3F2-1"/>
    <property type="protein sequence ID" value="ENSMUSP00000073082.6"/>
    <property type="gene ID" value="ENSMUSG00000025262.9"/>
</dbReference>
<dbReference type="GeneID" id="207375"/>
<dbReference type="KEGG" id="mmu:207375"/>
<dbReference type="UCSC" id="uc009upb.1">
    <molecule id="Q8C3F2-2"/>
    <property type="organism name" value="mouse"/>
</dbReference>
<dbReference type="UCSC" id="uc009upc.1">
    <molecule id="Q8C3F2-1"/>
    <property type="organism name" value="mouse"/>
</dbReference>
<dbReference type="AGR" id="MGI:2387687"/>
<dbReference type="CTD" id="54954"/>
<dbReference type="MGI" id="MGI:2387687">
    <property type="gene designation" value="Fam120c"/>
</dbReference>
<dbReference type="VEuPathDB" id="HostDB:ENSMUSG00000025262"/>
<dbReference type="eggNOG" id="ENOG502QQNQ">
    <property type="taxonomic scope" value="Eukaryota"/>
</dbReference>
<dbReference type="GeneTree" id="ENSGT00530000063168"/>
<dbReference type="HOGENOM" id="CLU_008339_0_0_1"/>
<dbReference type="InParanoid" id="Q8C3F2"/>
<dbReference type="OMA" id="RYLPMNN"/>
<dbReference type="OrthoDB" id="10061469at2759"/>
<dbReference type="PhylomeDB" id="Q8C3F2"/>
<dbReference type="TreeFam" id="TF328642"/>
<dbReference type="BioGRID-ORCS" id="207375">
    <property type="hits" value="5 hits in 79 CRISPR screens"/>
</dbReference>
<dbReference type="CD-CODE" id="CE726F99">
    <property type="entry name" value="Postsynaptic density"/>
</dbReference>
<dbReference type="ChiTaRS" id="Fam120c">
    <property type="organism name" value="mouse"/>
</dbReference>
<dbReference type="PRO" id="PR:Q8C3F2"/>
<dbReference type="Proteomes" id="UP000000589">
    <property type="component" value="Chromosome X"/>
</dbReference>
<dbReference type="RNAct" id="Q8C3F2">
    <property type="molecule type" value="protein"/>
</dbReference>
<dbReference type="Bgee" id="ENSMUSG00000025262">
    <property type="expression patterns" value="Expressed in humerus cartilage element and 202 other cell types or tissues"/>
</dbReference>
<dbReference type="FunFam" id="3.40.50.1010:FF:000009">
    <property type="entry name" value="Constitutive coactivator of PPAR-gamma-like protein 1"/>
    <property type="match status" value="1"/>
</dbReference>
<dbReference type="InterPro" id="IPR026784">
    <property type="entry name" value="Coact_PPARg"/>
</dbReference>
<dbReference type="InterPro" id="IPR029060">
    <property type="entry name" value="PIN-like_dom_sf"/>
</dbReference>
<dbReference type="PANTHER" id="PTHR15976">
    <property type="entry name" value="CONSTITUTIVE COACTIVATOR OF PEROXISOME PROLIFERATOR-ACTIVATED RECEPTOR GAMMA"/>
    <property type="match status" value="1"/>
</dbReference>
<dbReference type="PANTHER" id="PTHR15976:SF15">
    <property type="entry name" value="CONSTITUTIVE COACTIVATOR OF PPAR-GAMMA-LIKE PROTEIN 2"/>
    <property type="match status" value="1"/>
</dbReference>
<dbReference type="SUPFAM" id="SSF88723">
    <property type="entry name" value="PIN domain-like"/>
    <property type="match status" value="1"/>
</dbReference>
<keyword id="KW-0025">Alternative splicing</keyword>
<keyword id="KW-0488">Methylation</keyword>
<keyword id="KW-1185">Reference proteome</keyword>
<proteinExistence type="evidence at protein level"/>
<organism>
    <name type="scientific">Mus musculus</name>
    <name type="common">Mouse</name>
    <dbReference type="NCBI Taxonomy" id="10090"/>
    <lineage>
        <taxon>Eukaryota</taxon>
        <taxon>Metazoa</taxon>
        <taxon>Chordata</taxon>
        <taxon>Craniata</taxon>
        <taxon>Vertebrata</taxon>
        <taxon>Euteleostomi</taxon>
        <taxon>Mammalia</taxon>
        <taxon>Eutheria</taxon>
        <taxon>Euarchontoglires</taxon>
        <taxon>Glires</taxon>
        <taxon>Rodentia</taxon>
        <taxon>Myomorpha</taxon>
        <taxon>Muroidea</taxon>
        <taxon>Muridae</taxon>
        <taxon>Murinae</taxon>
        <taxon>Mus</taxon>
        <taxon>Mus</taxon>
    </lineage>
</organism>
<sequence length="1091" mass="119718">MGVQGFQEFLEKRCPGAVVPVDLLKLARTVSRQQQQQHLHRQLPPAALAPGAPRITRGSAPLPPPPLPPAAFGAYSGGAGPSRHHHPAHHFHHHGQAPPGLHPPPPPPLPGARVLVDAGSALPRLYGGYQTDWVCGGQWNAMLGYLSALCQACAYPGGDGLELVVMFPGGLGKDRLAEWGRRCQAERQTAQLIVGHVGNKGTPPPRAWFLPPACLSHCVRLALIRFRVKVFQSLEDHHLEVVAFFRENGFHGLLAHDSEYALYNIPSYYSSHALKLSWNGKNLTTNQFLMQEVAKQLGLKRMNFPIFAALLGNHILPDEDLAAFHWSLLGPEHPLASLKVRAHQLVLPPCDVVIKAVSEYVSSIKDPSNLDVVGKDVFKQSQSRTEDKIERFKKAVEYYSVTTKLSSLPVGPSFLGFRNNRLGNPPLPRNQMGPISPGKPMFSRQVPQKMKYPPPFPMGPNSSLLFSHSVGESHAFSEDAMLQDNSFANWAVSYDSNTSQFPNCLTSKTSPPLGPDSSHSSSSDGDEANGAGSEQITEAVQQQPGWEDPNGDRGAWGQPADAGVSETTVAESEPHIPSLLSMSTRNHMDITIPPLPPVAPEVLRVAEHRHRRGLMYPYIYHVLTKGEIKIPVCIEDECNMELPPAALLFRSARQYVYGVLFSLAETQRKMERLAIRRRLPMEVPSVILKEWSAYKGKSPQTPELVSALTFREWTCPNLKKLWLGKAVEDKNRRMRAFLACMKSDTPSMLNPANVPTHLLLMCCVLRYMVQWPGGRILHRHELDTFLAQAVSTQLYEPDQLQELKIEKLDARGIQLAALFMSGVDTALFANDACGQPVPWEHCCPWIYFDGKLFQSKLIKAGRERVSLVELCDGQADLASKVEKMRQSILEGVNMNHPPPSALLPSPTFVPPMVPSLYPVSLYSRAMGSFPPPPQARSRGFAGLHPIPPQGGKLEIAGMVVGQWAGSRSSRSRGSFGMQVVSVGGPGKGHGKEQAGRGSKGHKKGNKQGSSDVISKAVELHQSRARSQVNGNNGTLIVEEKSDPLPAPSQCALSRDSNECNNSDDHCLPVKNGEKNHVPEQELEAVAQQKEE</sequence>
<feature type="chain" id="PRO_0000221629" description="Constitutive coactivator of PPAR-gamma-like protein 2">
    <location>
        <begin position="1"/>
        <end position="1091"/>
    </location>
</feature>
<feature type="region of interest" description="Disordered" evidence="1">
    <location>
        <begin position="35"/>
        <end position="105"/>
    </location>
</feature>
<feature type="region of interest" description="Disordered" evidence="1">
    <location>
        <begin position="503"/>
        <end position="575"/>
    </location>
</feature>
<feature type="region of interest" description="Disordered" evidence="1">
    <location>
        <begin position="966"/>
        <end position="1010"/>
    </location>
</feature>
<feature type="region of interest" description="Disordered" evidence="1">
    <location>
        <begin position="1037"/>
        <end position="1077"/>
    </location>
</feature>
<feature type="compositionally biased region" description="Low complexity" evidence="1">
    <location>
        <begin position="35"/>
        <end position="53"/>
    </location>
</feature>
<feature type="compositionally biased region" description="Basic residues" evidence="1">
    <location>
        <begin position="82"/>
        <end position="95"/>
    </location>
</feature>
<feature type="compositionally biased region" description="Polar residues" evidence="1">
    <location>
        <begin position="532"/>
        <end position="544"/>
    </location>
</feature>
<feature type="compositionally biased region" description="Low complexity" evidence="1">
    <location>
        <begin position="966"/>
        <end position="976"/>
    </location>
</feature>
<feature type="compositionally biased region" description="Basic and acidic residues" evidence="1">
    <location>
        <begin position="1062"/>
        <end position="1077"/>
    </location>
</feature>
<feature type="modified residue" description="Omega-N-methylarginine" evidence="5">
    <location>
        <position position="57"/>
    </location>
</feature>
<feature type="modified residue" description="Omega-N-methylarginine" evidence="5">
    <location>
        <position position="972"/>
    </location>
</feature>
<feature type="splice variant" id="VSP_010521" description="In isoform 2." evidence="3">
    <original>FQSLED</original>
    <variation>REGLDF</variation>
    <location>
        <begin position="231"/>
        <end position="236"/>
    </location>
</feature>
<feature type="splice variant" id="VSP_010522" description="In isoform 2." evidence="3">
    <location>
        <begin position="237"/>
        <end position="1091"/>
    </location>
</feature>
<feature type="splice variant" id="VSP_010523" description="In isoform 3." evidence="2">
    <original>HGKEQAGRG</original>
    <variation>YVPECVGMS</variation>
    <location>
        <begin position="989"/>
        <end position="997"/>
    </location>
</feature>
<feature type="splice variant" id="VSP_010524" description="In isoform 3." evidence="2">
    <location>
        <begin position="998"/>
        <end position="1091"/>
    </location>
</feature>
<feature type="sequence conflict" description="In Ref. 1; AAO24120." evidence="4" ref="1">
    <original>V</original>
    <variation>M</variation>
    <location>
        <position position="241"/>
    </location>
</feature>
<feature type="sequence conflict" description="In Ref. 1; AAO24119." evidence="4" ref="1">
    <original>K</original>
    <variation>R</variation>
    <location>
        <position position="730"/>
    </location>
</feature>
<feature type="sequence conflict" description="In Ref. 1; AAO24120." evidence="4" ref="1">
    <original>Q</original>
    <variation>R</variation>
    <location>
        <position position="874"/>
    </location>
</feature>
<comment type="alternative products">
    <event type="alternative splicing"/>
    <isoform>
        <id>Q8C3F2-1</id>
        <name>1</name>
        <sequence type="displayed"/>
    </isoform>
    <isoform>
        <id>Q8C3F2-2</id>
        <name>2</name>
        <sequence type="described" ref="VSP_010521 VSP_010522"/>
    </isoform>
    <isoform>
        <id>Q8C3F2-3</id>
        <name>3</name>
        <sequence type="described" ref="VSP_010523 VSP_010524"/>
    </isoform>
</comment>
<comment type="similarity">
    <text evidence="4">Belongs to the constitutive coactivator of PPAR-gamma family.</text>
</comment>
<comment type="sequence caution" evidence="4">
    <conflict type="erroneous initiation">
        <sequence resource="EMBL-CDS" id="BAC39601"/>
    </conflict>
</comment>
<name>F120C_MOUSE</name>
<reference key="1">
    <citation type="journal article" date="2003" name="Gene">
        <title>The human gene CXorf17 encodes a member of a novel family of putative transmembrane proteins: cDNA cloning and characterization of CXorf17 and its mouse ortholog orf34.</title>
        <authorList>
            <person name="Holden S."/>
            <person name="Raymond F.L."/>
        </authorList>
    </citation>
    <scope>NUCLEOTIDE SEQUENCE [MRNA] (ISOFORMS 1 AND 3)</scope>
    <source>
        <strain>BALB/cJ</strain>
        <tissue>Brain</tissue>
    </source>
</reference>
<reference key="2">
    <citation type="journal article" date="2005" name="Science">
        <title>The transcriptional landscape of the mammalian genome.</title>
        <authorList>
            <person name="Carninci P."/>
            <person name="Kasukawa T."/>
            <person name="Katayama S."/>
            <person name="Gough J."/>
            <person name="Frith M.C."/>
            <person name="Maeda N."/>
            <person name="Oyama R."/>
            <person name="Ravasi T."/>
            <person name="Lenhard B."/>
            <person name="Wells C."/>
            <person name="Kodzius R."/>
            <person name="Shimokawa K."/>
            <person name="Bajic V.B."/>
            <person name="Brenner S.E."/>
            <person name="Batalov S."/>
            <person name="Forrest A.R."/>
            <person name="Zavolan M."/>
            <person name="Davis M.J."/>
            <person name="Wilming L.G."/>
            <person name="Aidinis V."/>
            <person name="Allen J.E."/>
            <person name="Ambesi-Impiombato A."/>
            <person name="Apweiler R."/>
            <person name="Aturaliya R.N."/>
            <person name="Bailey T.L."/>
            <person name="Bansal M."/>
            <person name="Baxter L."/>
            <person name="Beisel K.W."/>
            <person name="Bersano T."/>
            <person name="Bono H."/>
            <person name="Chalk A.M."/>
            <person name="Chiu K.P."/>
            <person name="Choudhary V."/>
            <person name="Christoffels A."/>
            <person name="Clutterbuck D.R."/>
            <person name="Crowe M.L."/>
            <person name="Dalla E."/>
            <person name="Dalrymple B.P."/>
            <person name="de Bono B."/>
            <person name="Della Gatta G."/>
            <person name="di Bernardo D."/>
            <person name="Down T."/>
            <person name="Engstrom P."/>
            <person name="Fagiolini M."/>
            <person name="Faulkner G."/>
            <person name="Fletcher C.F."/>
            <person name="Fukushima T."/>
            <person name="Furuno M."/>
            <person name="Futaki S."/>
            <person name="Gariboldi M."/>
            <person name="Georgii-Hemming P."/>
            <person name="Gingeras T.R."/>
            <person name="Gojobori T."/>
            <person name="Green R.E."/>
            <person name="Gustincich S."/>
            <person name="Harbers M."/>
            <person name="Hayashi Y."/>
            <person name="Hensch T.K."/>
            <person name="Hirokawa N."/>
            <person name="Hill D."/>
            <person name="Huminiecki L."/>
            <person name="Iacono M."/>
            <person name="Ikeo K."/>
            <person name="Iwama A."/>
            <person name="Ishikawa T."/>
            <person name="Jakt M."/>
            <person name="Kanapin A."/>
            <person name="Katoh M."/>
            <person name="Kawasawa Y."/>
            <person name="Kelso J."/>
            <person name="Kitamura H."/>
            <person name="Kitano H."/>
            <person name="Kollias G."/>
            <person name="Krishnan S.P."/>
            <person name="Kruger A."/>
            <person name="Kummerfeld S.K."/>
            <person name="Kurochkin I.V."/>
            <person name="Lareau L.F."/>
            <person name="Lazarevic D."/>
            <person name="Lipovich L."/>
            <person name="Liu J."/>
            <person name="Liuni S."/>
            <person name="McWilliam S."/>
            <person name="Madan Babu M."/>
            <person name="Madera M."/>
            <person name="Marchionni L."/>
            <person name="Matsuda H."/>
            <person name="Matsuzawa S."/>
            <person name="Miki H."/>
            <person name="Mignone F."/>
            <person name="Miyake S."/>
            <person name="Morris K."/>
            <person name="Mottagui-Tabar S."/>
            <person name="Mulder N."/>
            <person name="Nakano N."/>
            <person name="Nakauchi H."/>
            <person name="Ng P."/>
            <person name="Nilsson R."/>
            <person name="Nishiguchi S."/>
            <person name="Nishikawa S."/>
            <person name="Nori F."/>
            <person name="Ohara O."/>
            <person name="Okazaki Y."/>
            <person name="Orlando V."/>
            <person name="Pang K.C."/>
            <person name="Pavan W.J."/>
            <person name="Pavesi G."/>
            <person name="Pesole G."/>
            <person name="Petrovsky N."/>
            <person name="Piazza S."/>
            <person name="Reed J."/>
            <person name="Reid J.F."/>
            <person name="Ring B.Z."/>
            <person name="Ringwald M."/>
            <person name="Rost B."/>
            <person name="Ruan Y."/>
            <person name="Salzberg S.L."/>
            <person name="Sandelin A."/>
            <person name="Schneider C."/>
            <person name="Schoenbach C."/>
            <person name="Sekiguchi K."/>
            <person name="Semple C.A."/>
            <person name="Seno S."/>
            <person name="Sessa L."/>
            <person name="Sheng Y."/>
            <person name="Shibata Y."/>
            <person name="Shimada H."/>
            <person name="Shimada K."/>
            <person name="Silva D."/>
            <person name="Sinclair B."/>
            <person name="Sperling S."/>
            <person name="Stupka E."/>
            <person name="Sugiura K."/>
            <person name="Sultana R."/>
            <person name="Takenaka Y."/>
            <person name="Taki K."/>
            <person name="Tammoja K."/>
            <person name="Tan S.L."/>
            <person name="Tang S."/>
            <person name="Taylor M.S."/>
            <person name="Tegner J."/>
            <person name="Teichmann S.A."/>
            <person name="Ueda H.R."/>
            <person name="van Nimwegen E."/>
            <person name="Verardo R."/>
            <person name="Wei C.L."/>
            <person name="Yagi K."/>
            <person name="Yamanishi H."/>
            <person name="Zabarovsky E."/>
            <person name="Zhu S."/>
            <person name="Zimmer A."/>
            <person name="Hide W."/>
            <person name="Bult C."/>
            <person name="Grimmond S.M."/>
            <person name="Teasdale R.D."/>
            <person name="Liu E.T."/>
            <person name="Brusic V."/>
            <person name="Quackenbush J."/>
            <person name="Wahlestedt C."/>
            <person name="Mattick J.S."/>
            <person name="Hume D.A."/>
            <person name="Kai C."/>
            <person name="Sasaki D."/>
            <person name="Tomaru Y."/>
            <person name="Fukuda S."/>
            <person name="Kanamori-Katayama M."/>
            <person name="Suzuki M."/>
            <person name="Aoki J."/>
            <person name="Arakawa T."/>
            <person name="Iida J."/>
            <person name="Imamura K."/>
            <person name="Itoh M."/>
            <person name="Kato T."/>
            <person name="Kawaji H."/>
            <person name="Kawagashira N."/>
            <person name="Kawashima T."/>
            <person name="Kojima M."/>
            <person name="Kondo S."/>
            <person name="Konno H."/>
            <person name="Nakano K."/>
            <person name="Ninomiya N."/>
            <person name="Nishio T."/>
            <person name="Okada M."/>
            <person name="Plessy C."/>
            <person name="Shibata K."/>
            <person name="Shiraki T."/>
            <person name="Suzuki S."/>
            <person name="Tagami M."/>
            <person name="Waki K."/>
            <person name="Watahiki A."/>
            <person name="Okamura-Oho Y."/>
            <person name="Suzuki H."/>
            <person name="Kawai J."/>
            <person name="Hayashizaki Y."/>
        </authorList>
    </citation>
    <scope>NUCLEOTIDE SEQUENCE [LARGE SCALE MRNA] (ISOFORM 2)</scope>
    <source>
        <strain>C57BL/6J</strain>
        <strain>NOD</strain>
        <tissue>Head</tissue>
        <tissue>Spleen</tissue>
    </source>
</reference>
<reference key="3">
    <citation type="journal article" date="2009" name="PLoS Biol.">
        <title>Lineage-specific biology revealed by a finished genome assembly of the mouse.</title>
        <authorList>
            <person name="Church D.M."/>
            <person name="Goodstadt L."/>
            <person name="Hillier L.W."/>
            <person name="Zody M.C."/>
            <person name="Goldstein S."/>
            <person name="She X."/>
            <person name="Bult C.J."/>
            <person name="Agarwala R."/>
            <person name="Cherry J.L."/>
            <person name="DiCuccio M."/>
            <person name="Hlavina W."/>
            <person name="Kapustin Y."/>
            <person name="Meric P."/>
            <person name="Maglott D."/>
            <person name="Birtle Z."/>
            <person name="Marques A.C."/>
            <person name="Graves T."/>
            <person name="Zhou S."/>
            <person name="Teague B."/>
            <person name="Potamousis K."/>
            <person name="Churas C."/>
            <person name="Place M."/>
            <person name="Herschleb J."/>
            <person name="Runnheim R."/>
            <person name="Forrest D."/>
            <person name="Amos-Landgraf J."/>
            <person name="Schwartz D.C."/>
            <person name="Cheng Z."/>
            <person name="Lindblad-Toh K."/>
            <person name="Eichler E.E."/>
            <person name="Ponting C.P."/>
        </authorList>
    </citation>
    <scope>NUCLEOTIDE SEQUENCE [LARGE SCALE GENOMIC DNA]</scope>
    <source>
        <strain>C57BL/6J</strain>
    </source>
</reference>
<reference key="4">
    <citation type="journal article" date="2004" name="Genome Res.">
        <title>The status, quality, and expansion of the NIH full-length cDNA project: the Mammalian Gene Collection (MGC).</title>
        <authorList>
            <consortium name="The MGC Project Team"/>
        </authorList>
    </citation>
    <scope>NUCLEOTIDE SEQUENCE [LARGE SCALE MRNA]</scope>
    <source>
        <tissue>Brain</tissue>
    </source>
</reference>
<reference key="5">
    <citation type="journal article" date="2010" name="Cell">
        <title>A tissue-specific atlas of mouse protein phosphorylation and expression.</title>
        <authorList>
            <person name="Huttlin E.L."/>
            <person name="Jedrychowski M.P."/>
            <person name="Elias J.E."/>
            <person name="Goswami T."/>
            <person name="Rad R."/>
            <person name="Beausoleil S.A."/>
            <person name="Villen J."/>
            <person name="Haas W."/>
            <person name="Sowa M.E."/>
            <person name="Gygi S.P."/>
        </authorList>
    </citation>
    <scope>IDENTIFICATION BY MASS SPECTROMETRY [LARGE SCALE ANALYSIS]</scope>
    <source>
        <tissue>Brain</tissue>
        <tissue>Brown adipose tissue</tissue>
        <tissue>Heart</tissue>
        <tissue>Liver</tissue>
        <tissue>Lung</tissue>
        <tissue>Pancreas</tissue>
    </source>
</reference>
<reference key="6">
    <citation type="journal article" date="2014" name="Mol. Cell. Proteomics">
        <title>Immunoaffinity enrichment and mass spectrometry analysis of protein methylation.</title>
        <authorList>
            <person name="Guo A."/>
            <person name="Gu H."/>
            <person name="Zhou J."/>
            <person name="Mulhern D."/>
            <person name="Wang Y."/>
            <person name="Lee K.A."/>
            <person name="Yang V."/>
            <person name="Aguiar M."/>
            <person name="Kornhauser J."/>
            <person name="Jia X."/>
            <person name="Ren J."/>
            <person name="Beausoleil S.A."/>
            <person name="Silva J.C."/>
            <person name="Vemulapalli V."/>
            <person name="Bedford M.T."/>
            <person name="Comb M.J."/>
        </authorList>
    </citation>
    <scope>METHYLATION [LARGE SCALE ANALYSIS] AT ARG-57 AND ARG-972</scope>
    <scope>IDENTIFICATION BY MASS SPECTROMETRY [LARGE SCALE ANALYSIS]</scope>
    <source>
        <tissue>Brain</tissue>
        <tissue>Embryo</tissue>
    </source>
</reference>
<accession>Q8C3F2</accession>
<accession>Q3U0F6</accession>